<proteinExistence type="evidence at protein level"/>
<comment type="function">
    <text evidence="6 7 8 9">Involved in the biosynthesis of pyridine alkaloid natural products, leading mainly to the production of anabasine, anatabine, nicotine and nornicotine, effective deterrents against herbivores with antiparasitic and pesticide properties (neurotoxins); nornicotine serves as the precursor in the synthesis of the carcinogen compound N'-nitrosonornicotine (NNN) (PubMed:16656744, PubMed:17174363, PubMed:17283012). Amine oxidase which mediates the deamination of N-methylputrescine to produce 4-methylaminobutanal (PubMed:17174363, PubMed:17283012). Oxidizes preferentially N-methylated amines (PubMed:24287136).</text>
</comment>
<comment type="catalytic activity">
    <reaction evidence="7 8 9">
        <text>a primary methyl amine + O2 + H2O = an aldehyde + H2O2 + NH4(+)</text>
        <dbReference type="Rhea" id="RHEA:16153"/>
        <dbReference type="ChEBI" id="CHEBI:15377"/>
        <dbReference type="ChEBI" id="CHEBI:15379"/>
        <dbReference type="ChEBI" id="CHEBI:16240"/>
        <dbReference type="ChEBI" id="CHEBI:17478"/>
        <dbReference type="ChEBI" id="CHEBI:28938"/>
        <dbReference type="ChEBI" id="CHEBI:228804"/>
        <dbReference type="EC" id="1.4.3.21"/>
    </reaction>
    <physiologicalReaction direction="left-to-right" evidence="7 8 9">
        <dbReference type="Rhea" id="RHEA:16154"/>
    </physiologicalReaction>
</comment>
<comment type="catalytic activity">
    <reaction evidence="7 8 9">
        <text>N-methylputrescine + O2 + H2O = 4-methylaminobutanal + H2O2 + NH4(+)</text>
        <dbReference type="Rhea" id="RHEA:71015"/>
        <dbReference type="ChEBI" id="CHEBI:15377"/>
        <dbReference type="ChEBI" id="CHEBI:15379"/>
        <dbReference type="ChEBI" id="CHEBI:16240"/>
        <dbReference type="ChEBI" id="CHEBI:28938"/>
        <dbReference type="ChEBI" id="CHEBI:58039"/>
        <dbReference type="ChEBI" id="CHEBI:190141"/>
    </reaction>
    <physiologicalReaction direction="left-to-right" evidence="7 8 9">
        <dbReference type="Rhea" id="RHEA:71016"/>
    </physiologicalReaction>
</comment>
<comment type="cofactor">
    <cofactor evidence="2">
        <name>Cu cation</name>
        <dbReference type="ChEBI" id="CHEBI:23378"/>
    </cofactor>
    <cofactor evidence="1">
        <name>Zn(2+)</name>
        <dbReference type="ChEBI" id="CHEBI:29105"/>
    </cofactor>
    <text evidence="1 2">Binds 1 copper ion per subunit (By similarity). Can also use zinc ion as cofactor (By similarity).</text>
</comment>
<comment type="cofactor">
    <cofactor evidence="2">
        <name>L-topaquinone</name>
        <dbReference type="ChEBI" id="CHEBI:79027"/>
    </cofactor>
    <text evidence="2">Contains 1 topaquinone per subunit.</text>
</comment>
<comment type="biophysicochemical properties">
    <kinetics>
        <KM evidence="9">309 uM for putrescine</KM>
        <KM evidence="9">57 uM for N-methylputrescine</KM>
        <KM evidence="9">215 uM for cadaverine</KM>
        <KM evidence="7">0.19 mM for N-methylputrescine</KM>
        <KM evidence="7">0.76 mM for putrescine</KM>
        <KM evidence="7">1.79 mM for cadaverine</KM>
        <KM evidence="7">0.35 mM for 1,3-diaminopropane</KM>
        <KM evidence="8">36 uM for N-methylputrescine</KM>
        <KM evidence="8">247 uM for putrescine</KM>
        <KM evidence="8">362 uM for cadaverine</KM>
        <KM evidence="8">158 uM for 1,3-diaminopropane</KM>
        <KM evidence="8">96 uM for N-methyl-1,3-diaminopropane</KM>
        <KM evidence="8">249 uM for n-butylamine</KM>
        <Vmax evidence="7">28.8 nmol/sec/mg enzyme with N-methylputrescine as substrate</Vmax>
        <Vmax evidence="7">11.1 nmol/sec/mg enzyme with putrescine as substrate</Vmax>
        <Vmax evidence="7">5.2 nmol/sec/mg enzyme with cadaverine as substrate</Vmax>
        <Vmax evidence="7">11.3 nmol/sec/mg enzyme with 1,3-diaminopropane as substrate</Vmax>
        <Vmax evidence="8">926.0 pmol/sec/mg enzyme with N-methylputrescine as substrate</Vmax>
        <Vmax evidence="8">902.0 pmol/sec/mg enzyme with putrescine as substrate</Vmax>
        <Vmax evidence="8">715.0 pmol/sec/mg enzyme with cadaverine as substrate</Vmax>
        <Vmax evidence="8">666.0 pmol/sec/mg enzyme with 1,3-diaminopropane as substrate</Vmax>
        <Vmax evidence="8">1270.0 pmol/sec/mg enzyme with N-methyl-1,3-diaminopropane as substrate</Vmax>
        <Vmax evidence="8">862.0 pmol/sec/mg enzyme with n-butylamine as substrate</Vmax>
        <Vmax evidence="9">750.0 pmol/sec/mg enzyme with putrescine as substrate</Vmax>
        <Vmax evidence="9">512.0 pmol/sec/mg enzyme with N-methylputrescine as substrate</Vmax>
        <Vmax evidence="9">920.0 pmol/sec/mg enzyme with cadaverine as substrate</Vmax>
    </kinetics>
</comment>
<comment type="pathway">
    <text evidence="6 7 8">Alkaloid biosynthesis; nicotine biosynthesis.</text>
</comment>
<comment type="subunit">
    <text evidence="8">Homodimer.</text>
</comment>
<comment type="subcellular location">
    <subcellularLocation>
        <location evidence="9">Peroxisome</location>
    </subcellularLocation>
</comment>
<comment type="tissue specificity">
    <text evidence="7 8 9">Mainly expressed in roots, and, to a lower extent, in stems.</text>
</comment>
<comment type="induction">
    <text evidence="7 8 9">Accumulates in roots upon auxin deprivation (PubMed:17174363). Induced by jasmonic acid (MeJA) (PubMed:17174363, PubMed:17283012, PubMed:24287136).</text>
</comment>
<comment type="PTM">
    <text evidence="2">Topaquinone (TPQ) is generated by copper-dependent autoxidation of a specific tyrosyl residue.</text>
</comment>
<comment type="disruption phenotype">
    <text evidence="8">Altered nicotine biosynthesis.</text>
</comment>
<comment type="similarity">
    <text evidence="12">Belongs to the copper/topaquinone oxidase family.</text>
</comment>
<dbReference type="EC" id="1.4.3.-" evidence="7 8 9"/>
<dbReference type="EC" id="1.4.3.21" evidence="9"/>
<dbReference type="EMBL" id="DQ873385">
    <property type="protein sequence ID" value="ABI93948.1"/>
    <property type="molecule type" value="mRNA"/>
</dbReference>
<dbReference type="EMBL" id="AB289456">
    <property type="protein sequence ID" value="BAF49519.1"/>
    <property type="molecule type" value="mRNA"/>
</dbReference>
<dbReference type="RefSeq" id="NP_001312728.1">
    <property type="nucleotide sequence ID" value="NM_001325799.1"/>
</dbReference>
<dbReference type="SMR" id="A0A1S4BDC4"/>
<dbReference type="STRING" id="4097.A0A1S4BDC4"/>
<dbReference type="PaxDb" id="4097-A0A1S4BDC4"/>
<dbReference type="GeneID" id="107807126"/>
<dbReference type="KEGG" id="nta:107807126"/>
<dbReference type="OMA" id="CMHPSET"/>
<dbReference type="OrthoDB" id="5379943at2759"/>
<dbReference type="BioCyc" id="MetaCyc:MONOMER-12442"/>
<dbReference type="UniPathway" id="UPA00107"/>
<dbReference type="Proteomes" id="UP000084051">
    <property type="component" value="Unplaced"/>
</dbReference>
<dbReference type="GO" id="GO:0005777">
    <property type="term" value="C:peroxisome"/>
    <property type="evidence" value="ECO:0000314"/>
    <property type="project" value="UniProtKB"/>
</dbReference>
<dbReference type="GO" id="GO:0052595">
    <property type="term" value="F:aliphatic amine oxidase activity"/>
    <property type="evidence" value="ECO:0000314"/>
    <property type="project" value="UniProtKB"/>
</dbReference>
<dbReference type="GO" id="GO:0005507">
    <property type="term" value="F:copper ion binding"/>
    <property type="evidence" value="ECO:0000318"/>
    <property type="project" value="GO_Central"/>
</dbReference>
<dbReference type="GO" id="GO:0052597">
    <property type="term" value="F:diamine oxidase activity"/>
    <property type="evidence" value="ECO:0000314"/>
    <property type="project" value="UniProtKB"/>
</dbReference>
<dbReference type="GO" id="GO:0042802">
    <property type="term" value="F:identical protein binding"/>
    <property type="evidence" value="ECO:0000314"/>
    <property type="project" value="UniProtKB"/>
</dbReference>
<dbReference type="GO" id="GO:0008131">
    <property type="term" value="F:primary methylamine oxidase activity"/>
    <property type="evidence" value="ECO:0000318"/>
    <property type="project" value="GO_Central"/>
</dbReference>
<dbReference type="GO" id="GO:0042803">
    <property type="term" value="F:protein homodimerization activity"/>
    <property type="evidence" value="ECO:0000314"/>
    <property type="project" value="UniProtKB"/>
</dbReference>
<dbReference type="GO" id="GO:0048038">
    <property type="term" value="F:quinone binding"/>
    <property type="evidence" value="ECO:0007669"/>
    <property type="project" value="InterPro"/>
</dbReference>
<dbReference type="GO" id="GO:0009820">
    <property type="term" value="P:alkaloid metabolic process"/>
    <property type="evidence" value="ECO:0007669"/>
    <property type="project" value="UniProtKB-KW"/>
</dbReference>
<dbReference type="GO" id="GO:0009308">
    <property type="term" value="P:amine metabolic process"/>
    <property type="evidence" value="ECO:0000318"/>
    <property type="project" value="GO_Central"/>
</dbReference>
<dbReference type="GO" id="GO:0042179">
    <property type="term" value="P:nicotine biosynthetic process"/>
    <property type="evidence" value="ECO:0000315"/>
    <property type="project" value="UniProtKB"/>
</dbReference>
<dbReference type="GO" id="GO:0009733">
    <property type="term" value="P:response to auxin"/>
    <property type="evidence" value="ECO:0000270"/>
    <property type="project" value="UniProtKB"/>
</dbReference>
<dbReference type="GO" id="GO:0009753">
    <property type="term" value="P:response to jasmonic acid"/>
    <property type="evidence" value="ECO:0000270"/>
    <property type="project" value="UniProtKB"/>
</dbReference>
<dbReference type="FunFam" id="2.70.98.20:FF:000001">
    <property type="entry name" value="Amine oxidase"/>
    <property type="match status" value="1"/>
</dbReference>
<dbReference type="FunFam" id="3.10.450.40:FF:000002">
    <property type="entry name" value="Amine oxidase"/>
    <property type="match status" value="1"/>
</dbReference>
<dbReference type="FunFam" id="3.10.450.40:FF:000004">
    <property type="entry name" value="Amine oxidase"/>
    <property type="match status" value="1"/>
</dbReference>
<dbReference type="Gene3D" id="3.10.450.40">
    <property type="match status" value="2"/>
</dbReference>
<dbReference type="Gene3D" id="2.70.98.20">
    <property type="entry name" value="Copper amine oxidase, catalytic domain"/>
    <property type="match status" value="1"/>
</dbReference>
<dbReference type="InterPro" id="IPR000269">
    <property type="entry name" value="Cu_amine_oxidase"/>
</dbReference>
<dbReference type="InterPro" id="IPR015798">
    <property type="entry name" value="Cu_amine_oxidase_C"/>
</dbReference>
<dbReference type="InterPro" id="IPR036460">
    <property type="entry name" value="Cu_amine_oxidase_C_sf"/>
</dbReference>
<dbReference type="InterPro" id="IPR016182">
    <property type="entry name" value="Cu_amine_oxidase_N-reg"/>
</dbReference>
<dbReference type="InterPro" id="IPR015800">
    <property type="entry name" value="Cu_amine_oxidase_N2"/>
</dbReference>
<dbReference type="InterPro" id="IPR015802">
    <property type="entry name" value="Cu_amine_oxidase_N3"/>
</dbReference>
<dbReference type="NCBIfam" id="NF008559">
    <property type="entry name" value="PRK11504.1"/>
    <property type="match status" value="1"/>
</dbReference>
<dbReference type="PANTHER" id="PTHR10638">
    <property type="entry name" value="COPPER AMINE OXIDASE"/>
    <property type="match status" value="1"/>
</dbReference>
<dbReference type="PANTHER" id="PTHR10638:SF82">
    <property type="entry name" value="DIAMINE OXIDASE [COPPER-CONTAINING] 1, PEROXISOMAL"/>
    <property type="match status" value="1"/>
</dbReference>
<dbReference type="Pfam" id="PF01179">
    <property type="entry name" value="Cu_amine_oxid"/>
    <property type="match status" value="1"/>
</dbReference>
<dbReference type="Pfam" id="PF02727">
    <property type="entry name" value="Cu_amine_oxidN2"/>
    <property type="match status" value="1"/>
</dbReference>
<dbReference type="Pfam" id="PF02728">
    <property type="entry name" value="Cu_amine_oxidN3"/>
    <property type="match status" value="1"/>
</dbReference>
<dbReference type="SUPFAM" id="SSF49998">
    <property type="entry name" value="Amine oxidase catalytic domain"/>
    <property type="match status" value="1"/>
</dbReference>
<dbReference type="SUPFAM" id="SSF54416">
    <property type="entry name" value="Amine oxidase N-terminal region"/>
    <property type="match status" value="2"/>
</dbReference>
<name>MPO1_TOBAC</name>
<gene>
    <name evidence="10 11" type="primary">MPO1</name>
    <name type="ORF">LOC107807126</name>
</gene>
<keyword id="KW-0017">Alkaloid metabolism</keyword>
<keyword id="KW-0186">Copper</keyword>
<keyword id="KW-1015">Disulfide bond</keyword>
<keyword id="KW-0464">Manganese</keyword>
<keyword id="KW-0479">Metal-binding</keyword>
<keyword id="KW-0560">Oxidoreductase</keyword>
<keyword id="KW-0576">Peroxisome</keyword>
<keyword id="KW-1185">Reference proteome</keyword>
<keyword id="KW-0801">TPQ</keyword>
<evidence type="ECO:0000250" key="1">
    <source>
        <dbReference type="UniProtKB" id="P12807"/>
    </source>
</evidence>
<evidence type="ECO:0000250" key="2">
    <source>
        <dbReference type="UniProtKB" id="P46883"/>
    </source>
</evidence>
<evidence type="ECO:0000250" key="3">
    <source>
        <dbReference type="UniProtKB" id="Q43077"/>
    </source>
</evidence>
<evidence type="ECO:0000255" key="4"/>
<evidence type="ECO:0000256" key="5">
    <source>
        <dbReference type="SAM" id="MobiDB-lite"/>
    </source>
</evidence>
<evidence type="ECO:0000269" key="6">
    <source>
    </source>
</evidence>
<evidence type="ECO:0000269" key="7">
    <source>
    </source>
</evidence>
<evidence type="ECO:0000269" key="8">
    <source>
    </source>
</evidence>
<evidence type="ECO:0000269" key="9">
    <source>
    </source>
</evidence>
<evidence type="ECO:0000303" key="10">
    <source>
    </source>
</evidence>
<evidence type="ECO:0000303" key="11">
    <source>
    </source>
</evidence>
<evidence type="ECO:0000305" key="12"/>
<accession>A0A1S4BDC4</accession>
<accession>A4GZ88</accession>
<feature type="chain" id="PRO_0000455786" description="N-methylputrescine oxidase 1, peroxisomal">
    <location>
        <begin position="1"/>
        <end position="790"/>
    </location>
</feature>
<feature type="region of interest" description="Disordered" evidence="5">
    <location>
        <begin position="1"/>
        <end position="23"/>
    </location>
</feature>
<feature type="compositionally biased region" description="Low complexity" evidence="5">
    <location>
        <begin position="9"/>
        <end position="23"/>
    </location>
</feature>
<feature type="active site" description="Proton acceptor" evidence="1">
    <location>
        <position position="425"/>
    </location>
</feature>
<feature type="active site" description="Schiff-base intermediate with substrate; via topaquinone" evidence="1">
    <location>
        <position position="509"/>
    </location>
</feature>
<feature type="binding site" evidence="1">
    <location>
        <begin position="423"/>
        <end position="434"/>
    </location>
    <ligand>
        <name>substrate</name>
    </ligand>
</feature>
<feature type="binding site" evidence="2">
    <location>
        <begin position="506"/>
        <end position="511"/>
    </location>
    <ligand>
        <name>substrate</name>
    </ligand>
</feature>
<feature type="binding site" evidence="1">
    <location>
        <position position="559"/>
    </location>
    <ligand>
        <name>Cu cation</name>
        <dbReference type="ChEBI" id="CHEBI:23378"/>
    </ligand>
</feature>
<feature type="binding site" evidence="1">
    <location>
        <position position="561"/>
    </location>
    <ligand>
        <name>Cu cation</name>
        <dbReference type="ChEBI" id="CHEBI:23378"/>
    </ligand>
</feature>
<feature type="binding site" evidence="3">
    <location>
        <position position="714"/>
    </location>
    <ligand>
        <name>Mn(2+)</name>
        <dbReference type="ChEBI" id="CHEBI:29035"/>
    </ligand>
</feature>
<feature type="binding site" evidence="3">
    <location>
        <position position="715"/>
    </location>
    <ligand>
        <name>Mn(2+)</name>
        <dbReference type="ChEBI" id="CHEBI:29035"/>
    </ligand>
</feature>
<feature type="binding site" evidence="1">
    <location>
        <position position="725"/>
    </location>
    <ligand>
        <name>Cu cation</name>
        <dbReference type="ChEBI" id="CHEBI:23378"/>
    </ligand>
</feature>
<feature type="site" description="Microbody targeting signal" evidence="4">
    <location>
        <begin position="788"/>
        <end position="790"/>
    </location>
</feature>
<feature type="modified residue" description="2',4',5'-topaquinone" evidence="1">
    <location>
        <position position="509"/>
    </location>
</feature>
<feature type="disulfide bond" evidence="1">
    <location>
        <begin position="444"/>
        <end position="470"/>
    </location>
</feature>
<feature type="sequence conflict" description="In Ref. 1; ABI93948 and 2; BAF49519." evidence="12" ref="1 2">
    <original>Q</original>
    <variation>K</variation>
    <location>
        <position position="309"/>
    </location>
</feature>
<sequence>MATTKQKVTAPSPSPSSSTASCCPSTSILRREATAAIAVVGDGLQNWTNIPSVDEKQKKTASSALASLPTTEPLSTNTSTKGIQIMTRAQTCHPLDPLSAAEISVAVATVRAAGETPEVRDGMRFIEVVLVEPDKSVVALADAYFFPPFQSSLMPRTKGGSQIPTKLPPRRARLIVYNKKTNETSIWIVELNEVHAAARGGHHRGKVIASNVVPDVQPPIDAQEYAECEAVVKSYPPFRDAMRRRGIDDLDLVMVDPWCVGYHSEADAPSRRLAKPLVFCRTESDCPMENGYARPVEGIYVLVDVQNMQIIEFEDRKLVPLPPVDPLRNYTAGETRGGVDRSDVKPLHIIQPEGPSFRISGNYVEWQKWNFRIGFTPREGLVIHSVAYLDGSRGRRPIAHRLSFVEMVVPYGDPNDPHYRKNAFDAGEDGLGKNAHSLKRGCDCLGYIKYFDAHFTNFTGGVETTENCVCLHEEDHGMLWKHQDWRTGLAEVRRSRRLTVSFVCTVANYEYAFYWHFYQDGKIEAEVKLTGILSLGALQPGEYRKYGTTILPGLYAPVHQHFFVARMNMAVDCKPGEAHNQVVEVNVKVEEPGKENVHNNAFYAEETLLRSELQAMRDCDPFSARHWIVRNTRTVNRTGQLTGYKLVPGPNCLPLAGPEAKFLRRAAFLKHNLWVTQYAPGEDFPGGEFPNQNPRVGEGLASWVKQDRPLEESDIVLWYIFGITHVPRLEDWPVMPVEHIGFVLQPHGYFNCSPAVDVPPPFACDSESRDSDVTETSVAKSTATSLLAKL</sequence>
<reference key="1">
    <citation type="journal article" date="2007" name="Phytochemistry">
        <title>Cloning and characterization of a Nicotiana tabacum methylputrescine oxidase transcript.</title>
        <authorList>
            <person name="Heim W.G."/>
            <person name="Sykes K.A."/>
            <person name="Hildreth S.B."/>
            <person name="Sun J."/>
            <person name="Lu R.-H."/>
            <person name="Jelesko J.G."/>
        </authorList>
    </citation>
    <scope>NUCLEOTIDE SEQUENCE [MRNA]</scope>
    <scope>FUNCTION</scope>
    <scope>CATALYTIC ACTIVITY</scope>
    <scope>PATHWAY</scope>
    <scope>TISSUE SPECIFICITY</scope>
    <scope>INDUCTION BY AUXIN AND JASMONATE</scope>
    <scope>BIOPHYSICOCHEMICAL PROPERTIES</scope>
    <source>
        <strain>cv. Burley 21</strain>
        <tissue>Root</tissue>
    </source>
</reference>
<reference key="2">
    <citation type="journal article" date="2007" name="Plant Cell Physiol.">
        <title>Molecular cloning of N-methylputrescine oxidase from tobacco.</title>
        <authorList>
            <person name="Katoh A."/>
            <person name="Shoji T."/>
            <person name="Hashimoto T."/>
        </authorList>
    </citation>
    <scope>NUCLEOTIDE SEQUENCE [MRNA]</scope>
    <scope>FUNCTION</scope>
    <scope>DISRUPTION PHENOTYPE</scope>
    <scope>CATALYTIC ACTIVITY</scope>
    <scope>BIOPHYSICOCHEMICAL PROPERTIES</scope>
    <scope>PATHWAY</scope>
    <scope>TISSUE SPECIFICITY</scope>
    <scope>INDUCTION BY JASMONATE</scope>
    <scope>SUBUNIT</scope>
</reference>
<reference key="3">
    <citation type="journal article" date="2014" name="Nat. Commun.">
        <title>The tobacco genome sequence and its comparison with those of tomato and potato.</title>
        <authorList>
            <person name="Sierro N."/>
            <person name="Battey J.N."/>
            <person name="Ouadi S."/>
            <person name="Bakaher N."/>
            <person name="Bovet L."/>
            <person name="Willig A."/>
            <person name="Goepfert S."/>
            <person name="Peitsch M.C."/>
            <person name="Ivanov N.V."/>
        </authorList>
    </citation>
    <scope>NUCLEOTIDE SEQUENCE [LARGE SCALE GENOMIC DNA]</scope>
    <source>
        <strain>cv. TN90</strain>
    </source>
</reference>
<reference key="4">
    <citation type="journal article" date="1968" name="Plant Physiol.">
        <title>Phytochemical Studies on the Tobacco Alkaloids. XII. Identification of gamma-Methylaminobutyraldehyde and its Precursor Role in Nicotine Biosynthesis.</title>
        <authorList>
            <person name="Mizusaki S."/>
            <person name="Kisaki T."/>
            <person name="Tamaki E."/>
        </authorList>
    </citation>
    <scope>FUNCTION</scope>
    <scope>PATHWAY</scope>
</reference>
<reference key="5">
    <citation type="journal article" date="2013" name="Phytochemistry">
        <title>Molecular genetics of alkaloid biosynthesis in Nicotiana tabacum.</title>
        <authorList>
            <person name="Dewey R.E."/>
            <person name="Xie J."/>
        </authorList>
    </citation>
    <scope>REVIEW ON ALKALOID BIOSYNTHESIS IN NICOTIANA TABACUM</scope>
</reference>
<reference key="6">
    <citation type="journal article" date="2014" name="Plant Cell Physiol.">
        <title>Molecular evolution of N-methylputrescine oxidase in tobacco.</title>
        <authorList>
            <person name="Naconsie M."/>
            <person name="Kato K."/>
            <person name="Shoji T."/>
            <person name="Hashimoto T."/>
        </authorList>
    </citation>
    <scope>FUNCTION</scope>
    <scope>BIOPHYSICOCHEMICAL PROPERTIES</scope>
    <scope>CATALYTIC ACTIVITY</scope>
    <scope>SUBCELLULAR LOCATION</scope>
    <scope>TISSUE SPECIFICITY</scope>
    <scope>INDUCTION BY JASMONIC ACID</scope>
</reference>
<reference key="7">
    <citation type="journal article" date="2015" name="Mol. Genet. Genomics">
        <title>Current status and prospects for the study of Nicotiana genomics, genetics, and nicotine biosynthesis genes.</title>
        <authorList>
            <person name="Wang X."/>
            <person name="Bennetzen J.L."/>
        </authorList>
    </citation>
    <scope>REVIEW ON NICOTINE BIOSYNTHESIS</scope>
</reference>
<protein>
    <recommendedName>
        <fullName evidence="10 11">N-methylputrescine oxidase 1, peroxisomal</fullName>
        <shortName evidence="10 11">NtMPO1</shortName>
        <ecNumber evidence="7 8 9">1.4.3.-</ecNumber>
    </recommendedName>
    <alternativeName>
        <fullName>Copper methylamine oxidase</fullName>
        <ecNumber evidence="9">1.4.3.21</ecNumber>
    </alternativeName>
</protein>
<organism>
    <name type="scientific">Nicotiana tabacum</name>
    <name type="common">Common tobacco</name>
    <dbReference type="NCBI Taxonomy" id="4097"/>
    <lineage>
        <taxon>Eukaryota</taxon>
        <taxon>Viridiplantae</taxon>
        <taxon>Streptophyta</taxon>
        <taxon>Embryophyta</taxon>
        <taxon>Tracheophyta</taxon>
        <taxon>Spermatophyta</taxon>
        <taxon>Magnoliopsida</taxon>
        <taxon>eudicotyledons</taxon>
        <taxon>Gunneridae</taxon>
        <taxon>Pentapetalae</taxon>
        <taxon>asterids</taxon>
        <taxon>lamiids</taxon>
        <taxon>Solanales</taxon>
        <taxon>Solanaceae</taxon>
        <taxon>Nicotianoideae</taxon>
        <taxon>Nicotianeae</taxon>
        <taxon>Nicotiana</taxon>
    </lineage>
</organism>